<gene>
    <name type="primary">DAK1</name>
    <name type="ordered locus">YML070W</name>
</gene>
<protein>
    <recommendedName>
        <fullName>Dihydroxyacetone kinase 1</fullName>
        <shortName>DHA kinase 1</shortName>
        <ecNumber>2.7.1.28</ecNumber>
        <ecNumber>2.7.1.29</ecNumber>
    </recommendedName>
    <alternativeName>
        <fullName>Glycerone kinase 1</fullName>
    </alternativeName>
    <alternativeName>
        <fullName>Triokinase 1</fullName>
    </alternativeName>
    <alternativeName>
        <fullName>Triose kinase 1</fullName>
    </alternativeName>
</protein>
<sequence>MSAKSFEVTDPVNSSLKGFALANPSITLVPEEKILFRKTDSDKIALISGGGSGHEPTHAGFIGKGMLSGAVVGEIFASPSTKQILNAIRLVNENASGVLLIVKNYTGDVLHFGLSAERARALGINCRVAVIGDDVAVGREKGGMVGRRALAGTVLVHKIVGAFAEEYSSKYGLDGTAKVAKIINDNLVTIGSSLDHCKVPGRKFESELNEKQMELGMGIHNEPGVKVLDPIPSTEDLISKYMLPKLLDPNDKDRAFVKFDEDDEVVLLVNNLGGVSNFVISSITSKTTDFLKENYNITPVQTIAGTLMTSFNGNGFSITLLNATKATKALQSDFEEIKSVLDLLNAFTNAPGWPIADFEKTSAPSVNDDLLHNEVTAKAVGTYDFDKFAEWMKSGAEQVIKSEPHITELDNQVGDGDCGYTLVAGVKGITENLDKLSKDSLSQAVAQISDFIEGSMGGTSGGLYSILLSGFSHGLIQVCKSKDEPVTKEIVAKSLGIALDTLYKYTKARKGSSTMIDALEPFVKEFTASKDFNKAVKAAEEGAKSTATFEAKFGRASYVGDSSQVEDPGAVGLCEFLKGVQSAL</sequence>
<proteinExistence type="evidence at protein level"/>
<dbReference type="EC" id="2.7.1.28"/>
<dbReference type="EC" id="2.7.1.29"/>
<dbReference type="EMBL" id="Z38114">
    <property type="protein sequence ID" value="CAA86250.1"/>
    <property type="molecule type" value="Genomic_DNA"/>
</dbReference>
<dbReference type="EMBL" id="BK006946">
    <property type="protein sequence ID" value="DAA09827.1"/>
    <property type="molecule type" value="Genomic_DNA"/>
</dbReference>
<dbReference type="PIR" id="S48327">
    <property type="entry name" value="S48327"/>
</dbReference>
<dbReference type="RefSeq" id="NP_013641.1">
    <property type="nucleotide sequence ID" value="NM_001182429.1"/>
</dbReference>
<dbReference type="SMR" id="P54838"/>
<dbReference type="BioGRID" id="35096">
    <property type="interactions" value="81"/>
</dbReference>
<dbReference type="DIP" id="DIP-4531N"/>
<dbReference type="FunCoup" id="P54838">
    <property type="interactions" value="651"/>
</dbReference>
<dbReference type="IntAct" id="P54838">
    <property type="interactions" value="5"/>
</dbReference>
<dbReference type="STRING" id="4932.YML070W"/>
<dbReference type="iPTMnet" id="P54838"/>
<dbReference type="PaxDb" id="4932-YML070W"/>
<dbReference type="PeptideAtlas" id="P54838"/>
<dbReference type="EnsemblFungi" id="YML070W_mRNA">
    <property type="protein sequence ID" value="YML070W"/>
    <property type="gene ID" value="YML070W"/>
</dbReference>
<dbReference type="GeneID" id="854932"/>
<dbReference type="KEGG" id="sce:YML070W"/>
<dbReference type="AGR" id="SGD:S000004535"/>
<dbReference type="SGD" id="S000004535">
    <property type="gene designation" value="DAK1"/>
</dbReference>
<dbReference type="VEuPathDB" id="FungiDB:YML070W"/>
<dbReference type="eggNOG" id="KOG2426">
    <property type="taxonomic scope" value="Eukaryota"/>
</dbReference>
<dbReference type="GeneTree" id="ENSGT00390000015415"/>
<dbReference type="HOGENOM" id="CLU_017054_6_0_1"/>
<dbReference type="InParanoid" id="P54838"/>
<dbReference type="OMA" id="ALNMNGF"/>
<dbReference type="OrthoDB" id="1724672at2759"/>
<dbReference type="BioCyc" id="MetaCyc:YML070W-MONOMER"/>
<dbReference type="BioCyc" id="YEAST:YML070W-MONOMER"/>
<dbReference type="BRENDA" id="2.7.1.29">
    <property type="organism ID" value="984"/>
</dbReference>
<dbReference type="Reactome" id="R-SCE-70350">
    <property type="pathway name" value="Fructose catabolism"/>
</dbReference>
<dbReference type="UniPathway" id="UPA00617">
    <property type="reaction ID" value="UER00669"/>
</dbReference>
<dbReference type="BioGRID-ORCS" id="854932">
    <property type="hits" value="4 hits in 10 CRISPR screens"/>
</dbReference>
<dbReference type="PRO" id="PR:P54838"/>
<dbReference type="Proteomes" id="UP000002311">
    <property type="component" value="Chromosome XIII"/>
</dbReference>
<dbReference type="RNAct" id="P54838">
    <property type="molecule type" value="protein"/>
</dbReference>
<dbReference type="GO" id="GO:0005737">
    <property type="term" value="C:cytoplasm"/>
    <property type="evidence" value="ECO:0007005"/>
    <property type="project" value="SGD"/>
</dbReference>
<dbReference type="GO" id="GO:0005829">
    <property type="term" value="C:cytosol"/>
    <property type="evidence" value="ECO:0000318"/>
    <property type="project" value="GO_Central"/>
</dbReference>
<dbReference type="GO" id="GO:0005524">
    <property type="term" value="F:ATP binding"/>
    <property type="evidence" value="ECO:0007669"/>
    <property type="project" value="UniProtKB-KW"/>
</dbReference>
<dbReference type="GO" id="GO:0004371">
    <property type="term" value="F:glycerone kinase activity"/>
    <property type="evidence" value="ECO:0000315"/>
    <property type="project" value="SGD"/>
</dbReference>
<dbReference type="GO" id="GO:0050354">
    <property type="term" value="F:triokinase activity"/>
    <property type="evidence" value="ECO:0007669"/>
    <property type="project" value="UniProtKB-EC"/>
</dbReference>
<dbReference type="GO" id="GO:0019588">
    <property type="term" value="P:anaerobic glycerol catabolic process"/>
    <property type="evidence" value="ECO:0007669"/>
    <property type="project" value="UniProtKB-UniPathway"/>
</dbReference>
<dbReference type="GO" id="GO:0019563">
    <property type="term" value="P:glycerol catabolic process"/>
    <property type="evidence" value="ECO:0000318"/>
    <property type="project" value="GO_Central"/>
</dbReference>
<dbReference type="GO" id="GO:0061610">
    <property type="term" value="P:glycerol to glycerone phosphate metabolic process"/>
    <property type="evidence" value="ECO:0000316"/>
    <property type="project" value="SGD"/>
</dbReference>
<dbReference type="FunFam" id="3.40.50.10440:FF:000002">
    <property type="entry name" value="Dihydroxyacetone kinase"/>
    <property type="match status" value="1"/>
</dbReference>
<dbReference type="FunFam" id="1.25.40.340:FF:000001">
    <property type="entry name" value="Dihydroxyacetone kinase 1"/>
    <property type="match status" value="1"/>
</dbReference>
<dbReference type="FunFam" id="3.30.1180.20:FF:000001">
    <property type="entry name" value="Dihydroxyacetone kinase 1"/>
    <property type="match status" value="1"/>
</dbReference>
<dbReference type="Gene3D" id="1.25.40.340">
    <property type="match status" value="1"/>
</dbReference>
<dbReference type="Gene3D" id="3.40.50.10440">
    <property type="entry name" value="Dihydroxyacetone kinase, domain 1"/>
    <property type="match status" value="1"/>
</dbReference>
<dbReference type="Gene3D" id="3.30.1180.20">
    <property type="entry name" value="Dihydroxyacetone kinase, domain 2"/>
    <property type="match status" value="1"/>
</dbReference>
<dbReference type="InterPro" id="IPR012734">
    <property type="entry name" value="DhaK_ATP"/>
</dbReference>
<dbReference type="InterPro" id="IPR004006">
    <property type="entry name" value="DhaK_dom"/>
</dbReference>
<dbReference type="InterPro" id="IPR004007">
    <property type="entry name" value="DhaL_dom"/>
</dbReference>
<dbReference type="InterPro" id="IPR036117">
    <property type="entry name" value="DhaL_dom_sf"/>
</dbReference>
<dbReference type="InterPro" id="IPR050861">
    <property type="entry name" value="Dihydroxyacetone_Kinase"/>
</dbReference>
<dbReference type="NCBIfam" id="TIGR02361">
    <property type="entry name" value="dak_ATP"/>
    <property type="match status" value="1"/>
</dbReference>
<dbReference type="PANTHER" id="PTHR28629:SF14">
    <property type="entry name" value="DIHYDROXYACETONE KINASE 1"/>
    <property type="match status" value="1"/>
</dbReference>
<dbReference type="PANTHER" id="PTHR28629">
    <property type="entry name" value="TRIOKINASE/FMN CYCLASE"/>
    <property type="match status" value="1"/>
</dbReference>
<dbReference type="Pfam" id="PF02733">
    <property type="entry name" value="Dak1"/>
    <property type="match status" value="1"/>
</dbReference>
<dbReference type="Pfam" id="PF02734">
    <property type="entry name" value="Dak2"/>
    <property type="match status" value="1"/>
</dbReference>
<dbReference type="SMART" id="SM01120">
    <property type="entry name" value="Dak2"/>
    <property type="match status" value="1"/>
</dbReference>
<dbReference type="SUPFAM" id="SSF82549">
    <property type="entry name" value="DAK1/DegV-like"/>
    <property type="match status" value="1"/>
</dbReference>
<dbReference type="SUPFAM" id="SSF101473">
    <property type="entry name" value="DhaL-like"/>
    <property type="match status" value="1"/>
</dbReference>
<dbReference type="PROSITE" id="PS51481">
    <property type="entry name" value="DHAK"/>
    <property type="match status" value="1"/>
</dbReference>
<dbReference type="PROSITE" id="PS51480">
    <property type="entry name" value="DHAL"/>
    <property type="match status" value="1"/>
</dbReference>
<keyword id="KW-0007">Acetylation</keyword>
<keyword id="KW-0067">ATP-binding</keyword>
<keyword id="KW-0903">Direct protein sequencing</keyword>
<keyword id="KW-0319">Glycerol metabolism</keyword>
<keyword id="KW-0418">Kinase</keyword>
<keyword id="KW-0547">Nucleotide-binding</keyword>
<keyword id="KW-0597">Phosphoprotein</keyword>
<keyword id="KW-1185">Reference proteome</keyword>
<keyword id="KW-0808">Transferase</keyword>
<name>DAK1_YEAST</name>
<feature type="initiator methionine" description="Removed" evidence="6">
    <location>
        <position position="1"/>
    </location>
</feature>
<feature type="chain" id="PRO_0000121522" description="Dihydroxyacetone kinase 1">
    <location>
        <begin position="2"/>
        <end position="584"/>
    </location>
</feature>
<feature type="domain" description="DhaK" evidence="3">
    <location>
        <begin position="7"/>
        <end position="353"/>
    </location>
</feature>
<feature type="domain" description="DhaL" evidence="2">
    <location>
        <begin position="386"/>
        <end position="582"/>
    </location>
</feature>
<feature type="active site" description="Tele-hemiaminal-histidine intermediate" evidence="3">
    <location>
        <position position="220"/>
    </location>
</feature>
<feature type="binding site" evidence="1">
    <location>
        <begin position="51"/>
        <end position="54"/>
    </location>
    <ligand>
        <name>substrate</name>
    </ligand>
</feature>
<feature type="binding site" evidence="1">
    <location>
        <position position="103"/>
    </location>
    <ligand>
        <name>substrate</name>
    </ligand>
</feature>
<feature type="binding site" evidence="1">
    <location>
        <position position="108"/>
    </location>
    <ligand>
        <name>substrate</name>
    </ligand>
</feature>
<feature type="binding site" evidence="1">
    <location>
        <begin position="415"/>
        <end position="418"/>
    </location>
    <ligand>
        <name>ATP</name>
        <dbReference type="ChEBI" id="CHEBI:30616"/>
    </ligand>
</feature>
<feature type="binding site" evidence="1">
    <location>
        <begin position="459"/>
        <end position="460"/>
    </location>
    <ligand>
        <name>ATP</name>
        <dbReference type="ChEBI" id="CHEBI:30616"/>
    </ligand>
</feature>
<feature type="binding site" evidence="1">
    <location>
        <begin position="514"/>
        <end position="515"/>
    </location>
    <ligand>
        <name>ATP</name>
        <dbReference type="ChEBI" id="CHEBI:30616"/>
    </ligand>
</feature>
<feature type="binding site" evidence="1">
    <location>
        <begin position="567"/>
        <end position="569"/>
    </location>
    <ligand>
        <name>ATP</name>
        <dbReference type="ChEBI" id="CHEBI:30616"/>
    </ligand>
</feature>
<feature type="modified residue" description="N-acetylserine" evidence="6">
    <location>
        <position position="2"/>
    </location>
</feature>
<feature type="modified residue" description="Phosphoserine" evidence="6">
    <location>
        <position position="2"/>
    </location>
</feature>
<feature type="modified residue" description="Phosphoserine" evidence="7 8">
    <location>
        <position position="5"/>
    </location>
</feature>
<feature type="modified residue" description="Phosphoserine" evidence="7">
    <location>
        <position position="365"/>
    </location>
</feature>
<feature type="modified residue" description="Phosphoserine" evidence="8">
    <location>
        <position position="512"/>
    </location>
</feature>
<evidence type="ECO:0000250" key="1"/>
<evidence type="ECO:0000255" key="2">
    <source>
        <dbReference type="PROSITE-ProRule" id="PRU00813"/>
    </source>
</evidence>
<evidence type="ECO:0000255" key="3">
    <source>
        <dbReference type="PROSITE-ProRule" id="PRU00814"/>
    </source>
</evidence>
<evidence type="ECO:0000269" key="4">
    <source>
    </source>
</evidence>
<evidence type="ECO:0000305" key="5"/>
<evidence type="ECO:0007744" key="6">
    <source>
    </source>
</evidence>
<evidence type="ECO:0007744" key="7">
    <source>
    </source>
</evidence>
<evidence type="ECO:0007744" key="8">
    <source>
    </source>
</evidence>
<reference key="1">
    <citation type="journal article" date="1997" name="Nature">
        <title>The nucleotide sequence of Saccharomyces cerevisiae chromosome XIII.</title>
        <authorList>
            <person name="Bowman S."/>
            <person name="Churcher C.M."/>
            <person name="Badcock K."/>
            <person name="Brown D."/>
            <person name="Chillingworth T."/>
            <person name="Connor R."/>
            <person name="Dedman K."/>
            <person name="Devlin K."/>
            <person name="Gentles S."/>
            <person name="Hamlin N."/>
            <person name="Hunt S."/>
            <person name="Jagels K."/>
            <person name="Lye G."/>
            <person name="Moule S."/>
            <person name="Odell C."/>
            <person name="Pearson D."/>
            <person name="Rajandream M.A."/>
            <person name="Rice P."/>
            <person name="Skelton J."/>
            <person name="Walsh S.V."/>
            <person name="Whitehead S."/>
            <person name="Barrell B.G."/>
        </authorList>
    </citation>
    <scope>NUCLEOTIDE SEQUENCE [LARGE SCALE GENOMIC DNA]</scope>
    <source>
        <strain>ATCC 204508 / S288c</strain>
    </source>
</reference>
<reference key="2">
    <citation type="journal article" date="2014" name="G3 (Bethesda)">
        <title>The reference genome sequence of Saccharomyces cerevisiae: Then and now.</title>
        <authorList>
            <person name="Engel S.R."/>
            <person name="Dietrich F.S."/>
            <person name="Fisk D.G."/>
            <person name="Binkley G."/>
            <person name="Balakrishnan R."/>
            <person name="Costanzo M.C."/>
            <person name="Dwight S.S."/>
            <person name="Hitz B.C."/>
            <person name="Karra K."/>
            <person name="Nash R.S."/>
            <person name="Weng S."/>
            <person name="Wong E.D."/>
            <person name="Lloyd P."/>
            <person name="Skrzypek M.S."/>
            <person name="Miyasato S.R."/>
            <person name="Simison M."/>
            <person name="Cherry J.M."/>
        </authorList>
    </citation>
    <scope>GENOME REANNOTATION</scope>
    <source>
        <strain>ATCC 204508 / S288c</strain>
    </source>
</reference>
<reference key="3">
    <citation type="journal article" date="1997" name="J. Biol. Chem.">
        <title>Metabolic and regulatory changes associated with growth of Saccharomyces cerevisiae in 1.4 M NaCl. Evidence for osmotic induction of glycerol dissimilation via the dihydroxyacetone pathway.</title>
        <authorList>
            <person name="Norbeck J."/>
            <person name="Blomberg A."/>
        </authorList>
    </citation>
    <scope>PROTEIN SEQUENCE OF 104-112 AND 159-167</scope>
    <scope>PARTIAL CHARACTERIZATION</scope>
    <source>
        <strain>ATCC 44827 / SKQ2N</strain>
    </source>
</reference>
<reference key="4">
    <citation type="journal article" date="2003" name="Nature">
        <title>Global analysis of protein expression in yeast.</title>
        <authorList>
            <person name="Ghaemmaghami S."/>
            <person name="Huh W.-K."/>
            <person name="Bower K."/>
            <person name="Howson R.W."/>
            <person name="Belle A."/>
            <person name="Dephoure N."/>
            <person name="O'Shea E.K."/>
            <person name="Weissman J.S."/>
        </authorList>
    </citation>
    <scope>LEVEL OF PROTEIN EXPRESSION [LARGE SCALE ANALYSIS]</scope>
</reference>
<reference key="5">
    <citation type="journal article" date="2005" name="Mol. Cell. Proteomics">
        <title>Quantitative phosphoproteomics applied to the yeast pheromone signaling pathway.</title>
        <authorList>
            <person name="Gruhler A."/>
            <person name="Olsen J.V."/>
            <person name="Mohammed S."/>
            <person name="Mortensen P."/>
            <person name="Faergeman N.J."/>
            <person name="Mann M."/>
            <person name="Jensen O.N."/>
        </authorList>
    </citation>
    <scope>ACETYLATION [LARGE SCALE ANALYSIS] AT SER-2</scope>
    <scope>PHOSPHORYLATION [LARGE SCALE ANALYSIS] AT SER-2</scope>
    <scope>CLEAVAGE OF INITIATOR METHIONINE [LARGE SCALE ANALYSIS]</scope>
    <scope>IDENTIFICATION BY MASS SPECTROMETRY [LARGE SCALE ANALYSIS]</scope>
    <source>
        <strain>YAL6B</strain>
    </source>
</reference>
<reference key="6">
    <citation type="journal article" date="2008" name="Mol. Cell. Proteomics">
        <title>A multidimensional chromatography technology for in-depth phosphoproteome analysis.</title>
        <authorList>
            <person name="Albuquerque C.P."/>
            <person name="Smolka M.B."/>
            <person name="Payne S.H."/>
            <person name="Bafna V."/>
            <person name="Eng J."/>
            <person name="Zhou H."/>
        </authorList>
    </citation>
    <scope>PHOSPHORYLATION [LARGE SCALE ANALYSIS] AT SER-5 AND SER-365</scope>
    <scope>IDENTIFICATION BY MASS SPECTROMETRY [LARGE SCALE ANALYSIS]</scope>
</reference>
<reference key="7">
    <citation type="journal article" date="2009" name="Science">
        <title>Global analysis of Cdk1 substrate phosphorylation sites provides insights into evolution.</title>
        <authorList>
            <person name="Holt L.J."/>
            <person name="Tuch B.B."/>
            <person name="Villen J."/>
            <person name="Johnson A.D."/>
            <person name="Gygi S.P."/>
            <person name="Morgan D.O."/>
        </authorList>
    </citation>
    <scope>PHOSPHORYLATION [LARGE SCALE ANALYSIS] AT SER-5 AND SER-512</scope>
    <scope>IDENTIFICATION BY MASS SPECTROMETRY [LARGE SCALE ANALYSIS]</scope>
</reference>
<organism>
    <name type="scientific">Saccharomyces cerevisiae (strain ATCC 204508 / S288c)</name>
    <name type="common">Baker's yeast</name>
    <dbReference type="NCBI Taxonomy" id="559292"/>
    <lineage>
        <taxon>Eukaryota</taxon>
        <taxon>Fungi</taxon>
        <taxon>Dikarya</taxon>
        <taxon>Ascomycota</taxon>
        <taxon>Saccharomycotina</taxon>
        <taxon>Saccharomycetes</taxon>
        <taxon>Saccharomycetales</taxon>
        <taxon>Saccharomycetaceae</taxon>
        <taxon>Saccharomyces</taxon>
    </lineage>
</organism>
<comment type="function">
    <text evidence="1">Catalyzes both the phosphorylation of dihydroxyacetone and of glyceraldehyde.</text>
</comment>
<comment type="catalytic activity">
    <reaction>
        <text>dihydroxyacetone + ATP = dihydroxyacetone phosphate + ADP + H(+)</text>
        <dbReference type="Rhea" id="RHEA:15773"/>
        <dbReference type="ChEBI" id="CHEBI:15378"/>
        <dbReference type="ChEBI" id="CHEBI:16016"/>
        <dbReference type="ChEBI" id="CHEBI:30616"/>
        <dbReference type="ChEBI" id="CHEBI:57642"/>
        <dbReference type="ChEBI" id="CHEBI:456216"/>
        <dbReference type="EC" id="2.7.1.29"/>
    </reaction>
</comment>
<comment type="catalytic activity">
    <reaction>
        <text>D-glyceraldehyde + ATP = D-glyceraldehyde 3-phosphate + ADP + H(+)</text>
        <dbReference type="Rhea" id="RHEA:13941"/>
        <dbReference type="ChEBI" id="CHEBI:15378"/>
        <dbReference type="ChEBI" id="CHEBI:17378"/>
        <dbReference type="ChEBI" id="CHEBI:30616"/>
        <dbReference type="ChEBI" id="CHEBI:59776"/>
        <dbReference type="ChEBI" id="CHEBI:456216"/>
        <dbReference type="EC" id="2.7.1.28"/>
    </reaction>
</comment>
<comment type="pathway">
    <text>Polyol metabolism; glycerol fermentation; glycerone phosphate from glycerol (oxidative route): step 2/2.</text>
</comment>
<comment type="miscellaneous">
    <text evidence="4">Present with 23600 molecules/cell in log phase SD medium.</text>
</comment>
<comment type="similarity">
    <text evidence="5">Belongs to the dihydroxyacetone kinase (DAK) family.</text>
</comment>
<accession>P54838</accession>
<accession>D6VZA3</accession>